<feature type="chain" id="PRO_0000179385" description="Trigger factor">
    <location>
        <begin position="1"/>
        <end position="428"/>
    </location>
</feature>
<feature type="domain" description="PPIase FKBP-type" evidence="1">
    <location>
        <begin position="166"/>
        <end position="250"/>
    </location>
</feature>
<gene>
    <name evidence="1" type="primary">tig</name>
    <name type="ordered locus">MSC_0453</name>
</gene>
<dbReference type="EC" id="5.2.1.8" evidence="1"/>
<dbReference type="EMBL" id="BX293980">
    <property type="protein sequence ID" value="CAE77081.1"/>
    <property type="molecule type" value="Genomic_DNA"/>
</dbReference>
<dbReference type="RefSeq" id="NP_975439.1">
    <property type="nucleotide sequence ID" value="NC_005364.2"/>
</dbReference>
<dbReference type="RefSeq" id="WP_011166637.1">
    <property type="nucleotide sequence ID" value="NC_005364.2"/>
</dbReference>
<dbReference type="SMR" id="Q6MTF5"/>
<dbReference type="STRING" id="272632.MSC_0453"/>
<dbReference type="KEGG" id="mmy:MSC_0453"/>
<dbReference type="PATRIC" id="fig|272632.4.peg.493"/>
<dbReference type="eggNOG" id="COG0544">
    <property type="taxonomic scope" value="Bacteria"/>
</dbReference>
<dbReference type="HOGENOM" id="CLU_033058_3_2_14"/>
<dbReference type="Proteomes" id="UP000001016">
    <property type="component" value="Chromosome"/>
</dbReference>
<dbReference type="GO" id="GO:0005737">
    <property type="term" value="C:cytoplasm"/>
    <property type="evidence" value="ECO:0007669"/>
    <property type="project" value="UniProtKB-SubCell"/>
</dbReference>
<dbReference type="GO" id="GO:0003755">
    <property type="term" value="F:peptidyl-prolyl cis-trans isomerase activity"/>
    <property type="evidence" value="ECO:0007669"/>
    <property type="project" value="UniProtKB-UniRule"/>
</dbReference>
<dbReference type="GO" id="GO:0051301">
    <property type="term" value="P:cell division"/>
    <property type="evidence" value="ECO:0007669"/>
    <property type="project" value="UniProtKB-KW"/>
</dbReference>
<dbReference type="GO" id="GO:0006457">
    <property type="term" value="P:protein folding"/>
    <property type="evidence" value="ECO:0007669"/>
    <property type="project" value="UniProtKB-UniRule"/>
</dbReference>
<dbReference type="GO" id="GO:0015031">
    <property type="term" value="P:protein transport"/>
    <property type="evidence" value="ECO:0007669"/>
    <property type="project" value="UniProtKB-UniRule"/>
</dbReference>
<dbReference type="FunFam" id="3.10.50.40:FF:000001">
    <property type="entry name" value="Trigger factor"/>
    <property type="match status" value="1"/>
</dbReference>
<dbReference type="Gene3D" id="3.10.50.40">
    <property type="match status" value="1"/>
</dbReference>
<dbReference type="Gene3D" id="3.30.70.1050">
    <property type="entry name" value="Trigger factor ribosome-binding domain"/>
    <property type="match status" value="1"/>
</dbReference>
<dbReference type="Gene3D" id="1.10.3120.10">
    <property type="entry name" value="Trigger factor, C-terminal domain"/>
    <property type="match status" value="1"/>
</dbReference>
<dbReference type="HAMAP" id="MF_00303">
    <property type="entry name" value="Trigger_factor_Tig"/>
    <property type="match status" value="1"/>
</dbReference>
<dbReference type="InterPro" id="IPR046357">
    <property type="entry name" value="PPIase_dom_sf"/>
</dbReference>
<dbReference type="InterPro" id="IPR001179">
    <property type="entry name" value="PPIase_FKBP_dom"/>
</dbReference>
<dbReference type="InterPro" id="IPR005215">
    <property type="entry name" value="Trig_fac"/>
</dbReference>
<dbReference type="InterPro" id="IPR008880">
    <property type="entry name" value="Trigger_fac_C"/>
</dbReference>
<dbReference type="InterPro" id="IPR037041">
    <property type="entry name" value="Trigger_fac_C_sf"/>
</dbReference>
<dbReference type="InterPro" id="IPR008881">
    <property type="entry name" value="Trigger_fac_ribosome-bd_bac"/>
</dbReference>
<dbReference type="InterPro" id="IPR036611">
    <property type="entry name" value="Trigger_fac_ribosome-bd_sf"/>
</dbReference>
<dbReference type="InterPro" id="IPR027304">
    <property type="entry name" value="Trigger_fact/SurA_dom_sf"/>
</dbReference>
<dbReference type="NCBIfam" id="TIGR00115">
    <property type="entry name" value="tig"/>
    <property type="match status" value="1"/>
</dbReference>
<dbReference type="Pfam" id="PF00254">
    <property type="entry name" value="FKBP_C"/>
    <property type="match status" value="1"/>
</dbReference>
<dbReference type="Pfam" id="PF05698">
    <property type="entry name" value="Trigger_C"/>
    <property type="match status" value="1"/>
</dbReference>
<dbReference type="Pfam" id="PF05697">
    <property type="entry name" value="Trigger_N"/>
    <property type="match status" value="1"/>
</dbReference>
<dbReference type="PIRSF" id="PIRSF003095">
    <property type="entry name" value="Trigger_factor"/>
    <property type="match status" value="1"/>
</dbReference>
<dbReference type="SUPFAM" id="SSF54534">
    <property type="entry name" value="FKBP-like"/>
    <property type="match status" value="1"/>
</dbReference>
<dbReference type="SUPFAM" id="SSF109998">
    <property type="entry name" value="Triger factor/SurA peptide-binding domain-like"/>
    <property type="match status" value="1"/>
</dbReference>
<dbReference type="SUPFAM" id="SSF102735">
    <property type="entry name" value="Trigger factor ribosome-binding domain"/>
    <property type="match status" value="1"/>
</dbReference>
<dbReference type="PROSITE" id="PS50059">
    <property type="entry name" value="FKBP_PPIASE"/>
    <property type="match status" value="1"/>
</dbReference>
<name>TIG_MYCMS</name>
<accession>Q6MTF5</accession>
<keyword id="KW-0131">Cell cycle</keyword>
<keyword id="KW-0132">Cell division</keyword>
<keyword id="KW-0143">Chaperone</keyword>
<keyword id="KW-0963">Cytoplasm</keyword>
<keyword id="KW-0413">Isomerase</keyword>
<keyword id="KW-1185">Reference proteome</keyword>
<keyword id="KW-0697">Rotamase</keyword>
<sequence>MIFAQEKFVDQGQGKWTVTIQDDQWTEFLKKAKNRLKTNLVVPGFRKGKAPESETAKYLTPIKIYNEAFKIVVKPAFDFALSQENKIQNDNSPTPVIVKVSDKEIVIDFIFDLVLELKVGEYKNITTVKKPVVEVNQEDVDNVIDMYRSRFAMQKEKQADDQIQKGDIVTFDFKGYVDDQAFEGGEAKDFVLEIGSNQFVPGFEDSMIGLKVGENQEINVKFPEEYIPSLAGKDAKFVLNIKNIKEKILPAKDDELVKDLNLPDITTYEQLEQKVKEDVLEQKTKISKSEFVENIIDEIIKTSEFQIPKTIIERQIKDVKKEFEDQLAQQKITLDKYKEITKITQEEIDEELKSDAIHRIKSFLVASEIKNKENIVASEEAINAKFEEFANLYGIEADKIKSLIDNQAIKHQVESELLETFIFENNGN</sequence>
<organism>
    <name type="scientific">Mycoplasma mycoides subsp. mycoides SC (strain CCUG 32753 / NCTC 10114 / PG1)</name>
    <dbReference type="NCBI Taxonomy" id="272632"/>
    <lineage>
        <taxon>Bacteria</taxon>
        <taxon>Bacillati</taxon>
        <taxon>Mycoplasmatota</taxon>
        <taxon>Mollicutes</taxon>
        <taxon>Mycoplasmataceae</taxon>
        <taxon>Mycoplasma</taxon>
    </lineage>
</organism>
<reference key="1">
    <citation type="journal article" date="2004" name="Genome Res.">
        <title>The genome sequence of Mycoplasma mycoides subsp. mycoides SC type strain PG1T, the causative agent of contagious bovine pleuropneumonia (CBPP).</title>
        <authorList>
            <person name="Westberg J."/>
            <person name="Persson A."/>
            <person name="Holmberg A."/>
            <person name="Goesmann A."/>
            <person name="Lundeberg J."/>
            <person name="Johansson K.-E."/>
            <person name="Pettersson B."/>
            <person name="Uhlen M."/>
        </authorList>
    </citation>
    <scope>NUCLEOTIDE SEQUENCE [LARGE SCALE GENOMIC DNA]</scope>
    <source>
        <strain>CCUG 32753 / NCTC 10114 / PG1</strain>
    </source>
</reference>
<evidence type="ECO:0000255" key="1">
    <source>
        <dbReference type="HAMAP-Rule" id="MF_00303"/>
    </source>
</evidence>
<protein>
    <recommendedName>
        <fullName evidence="1">Trigger factor</fullName>
        <shortName evidence="1">TF</shortName>
        <ecNumber evidence="1">5.2.1.8</ecNumber>
    </recommendedName>
    <alternativeName>
        <fullName evidence="1">PPIase</fullName>
    </alternativeName>
</protein>
<comment type="function">
    <text evidence="1">Involved in protein export. Acts as a chaperone by maintaining the newly synthesized protein in an open conformation. Functions as a peptidyl-prolyl cis-trans isomerase.</text>
</comment>
<comment type="catalytic activity">
    <reaction evidence="1">
        <text>[protein]-peptidylproline (omega=180) = [protein]-peptidylproline (omega=0)</text>
        <dbReference type="Rhea" id="RHEA:16237"/>
        <dbReference type="Rhea" id="RHEA-COMP:10747"/>
        <dbReference type="Rhea" id="RHEA-COMP:10748"/>
        <dbReference type="ChEBI" id="CHEBI:83833"/>
        <dbReference type="ChEBI" id="CHEBI:83834"/>
        <dbReference type="EC" id="5.2.1.8"/>
    </reaction>
</comment>
<comment type="subcellular location">
    <subcellularLocation>
        <location>Cytoplasm</location>
    </subcellularLocation>
    <text evidence="1">About half TF is bound to the ribosome near the polypeptide exit tunnel while the other half is free in the cytoplasm.</text>
</comment>
<comment type="domain">
    <text evidence="1">Consists of 3 domains; the N-terminus binds the ribosome, the middle domain has PPIase activity, while the C-terminus has intrinsic chaperone activity on its own.</text>
</comment>
<comment type="similarity">
    <text evidence="1">Belongs to the FKBP-type PPIase family. Tig subfamily.</text>
</comment>
<proteinExistence type="inferred from homology"/>